<feature type="chain" id="PRO_0000425383" description="Protein trichome birefringence-like 18">
    <location>
        <begin position="1"/>
        <end position="533"/>
    </location>
</feature>
<feature type="transmembrane region" description="Helical; Signal-anchor for type II membrane protein" evidence="3">
    <location>
        <begin position="21"/>
        <end position="41"/>
    </location>
</feature>
<feature type="region of interest" description="Disordered" evidence="4">
    <location>
        <begin position="93"/>
        <end position="171"/>
    </location>
</feature>
<feature type="region of interest" description="Disordered" evidence="4">
    <location>
        <begin position="475"/>
        <end position="502"/>
    </location>
</feature>
<feature type="short sequence motif" description="GDS motif">
    <location>
        <begin position="248"/>
        <end position="250"/>
    </location>
</feature>
<feature type="short sequence motif" description="DCXHWCLPGXXDXWN motif">
    <location>
        <begin position="503"/>
        <end position="517"/>
    </location>
</feature>
<feature type="compositionally biased region" description="Basic and acidic residues" evidence="4">
    <location>
        <begin position="113"/>
        <end position="154"/>
    </location>
</feature>
<accession>Q8VYS5</accession>
<accession>Q9STK1</accession>
<sequence length="533" mass="59349">MAFGSPRNNSILAAAGFPRKVSTVAIAIGGLASFFVFGLLLRLSYPNSSSVGGIFYGIGNPEQVHVPLSLSNHTVNILQKSSDINAFDKNLTSDSSSGLPVVVSKSIPPPDFSSDRKLETPLTQEKEDLVSSDITEKTDVQSGERETNVSKAEDTPSASSPPDDVSETASAEPECDLYQGSWFYDPGGPLYTNNSCPVLTQMQNCQGNGRPDKGYENWRWKPSQCELPRFDARKFLELMKGKTLAFIGDSVARNQMESMLCLLWQVETPVNRGSRKMQRWYFKQSSVMIARIWSSWLVHQFNEKFDYAPEGVTKLKLDLPDERIMEAIPKFDVVVLSSGHWFAKQSVYILKEEIVGGQLWWPDKSKPMKVNNVDAFGISVETILKSMATHPNYSGLTIVRTFSPDHYEGGAWNTGGSCTGKEEPILPGKLVKNGFTEIMHEKQATGYNQAVDKVAENLKLKLKLMDITEAFGYRHDGHPGPFRSPDPNKITKRGPDGRPPPQDCLHWCMPGPVDTWNEMVLELIRRDRKSSST</sequence>
<keyword id="KW-0472">Membrane</keyword>
<keyword id="KW-1185">Reference proteome</keyword>
<keyword id="KW-0735">Signal-anchor</keyword>
<keyword id="KW-0812">Transmembrane</keyword>
<keyword id="KW-1133">Transmembrane helix</keyword>
<proteinExistence type="evidence at transcript level"/>
<comment type="function">
    <text evidence="1 2">May act as a bridging protein that binds pectin and other cell wall polysaccharides. Probably involved in maintaining esterification of pectins (By similarity). May be involved in the specific O-acetylation of cell wall polymers (By similarity).</text>
</comment>
<comment type="subcellular location">
    <subcellularLocation>
        <location evidence="5">Membrane</location>
        <topology evidence="5">Single-pass type II membrane protein</topology>
    </subcellularLocation>
</comment>
<comment type="miscellaneous">
    <text evidence="6">Contains 2 motifs that are conserved in esterases, but it is unlikely that this protein belongs to the catalytically active pectin esterases.</text>
</comment>
<comment type="similarity">
    <text evidence="5">Belongs to the PC-esterase family. TBL subfamily.</text>
</comment>
<comment type="sequence caution" evidence="5">
    <conflict type="erroneous gene model prediction">
        <sequence resource="EMBL-CDS" id="CAB45513"/>
    </conflict>
</comment>
<comment type="sequence caution" evidence="5">
    <conflict type="erroneous gene model prediction">
        <sequence resource="EMBL-CDS" id="CAB81347"/>
    </conflict>
</comment>
<name>TBL18_ARATH</name>
<evidence type="ECO:0000250" key="1">
    <source>
        <dbReference type="UniProtKB" id="Q9FG35"/>
    </source>
</evidence>
<evidence type="ECO:0000250" key="2">
    <source>
        <dbReference type="UniProtKB" id="Q9LY46"/>
    </source>
</evidence>
<evidence type="ECO:0000255" key="3"/>
<evidence type="ECO:0000256" key="4">
    <source>
        <dbReference type="SAM" id="MobiDB-lite"/>
    </source>
</evidence>
<evidence type="ECO:0000305" key="5"/>
<evidence type="ECO:0000305" key="6">
    <source>
    </source>
</evidence>
<reference key="1">
    <citation type="journal article" date="1999" name="Nature">
        <title>Sequence and analysis of chromosome 4 of the plant Arabidopsis thaliana.</title>
        <authorList>
            <person name="Mayer K.F.X."/>
            <person name="Schueller C."/>
            <person name="Wambutt R."/>
            <person name="Murphy G."/>
            <person name="Volckaert G."/>
            <person name="Pohl T."/>
            <person name="Duesterhoeft A."/>
            <person name="Stiekema W."/>
            <person name="Entian K.-D."/>
            <person name="Terryn N."/>
            <person name="Harris B."/>
            <person name="Ansorge W."/>
            <person name="Brandt P."/>
            <person name="Grivell L.A."/>
            <person name="Rieger M."/>
            <person name="Weichselgartner M."/>
            <person name="de Simone V."/>
            <person name="Obermaier B."/>
            <person name="Mache R."/>
            <person name="Mueller M."/>
            <person name="Kreis M."/>
            <person name="Delseny M."/>
            <person name="Puigdomenech P."/>
            <person name="Watson M."/>
            <person name="Schmidtheini T."/>
            <person name="Reichert B."/>
            <person name="Portetelle D."/>
            <person name="Perez-Alonso M."/>
            <person name="Boutry M."/>
            <person name="Bancroft I."/>
            <person name="Vos P."/>
            <person name="Hoheisel J."/>
            <person name="Zimmermann W."/>
            <person name="Wedler H."/>
            <person name="Ridley P."/>
            <person name="Langham S.-A."/>
            <person name="McCullagh B."/>
            <person name="Bilham L."/>
            <person name="Robben J."/>
            <person name="van der Schueren J."/>
            <person name="Grymonprez B."/>
            <person name="Chuang Y.-J."/>
            <person name="Vandenbussche F."/>
            <person name="Braeken M."/>
            <person name="Weltjens I."/>
            <person name="Voet M."/>
            <person name="Bastiaens I."/>
            <person name="Aert R."/>
            <person name="Defoor E."/>
            <person name="Weitzenegger T."/>
            <person name="Bothe G."/>
            <person name="Ramsperger U."/>
            <person name="Hilbert H."/>
            <person name="Braun M."/>
            <person name="Holzer E."/>
            <person name="Brandt A."/>
            <person name="Peters S."/>
            <person name="van Staveren M."/>
            <person name="Dirkse W."/>
            <person name="Mooijman P."/>
            <person name="Klein Lankhorst R."/>
            <person name="Rose M."/>
            <person name="Hauf J."/>
            <person name="Koetter P."/>
            <person name="Berneiser S."/>
            <person name="Hempel S."/>
            <person name="Feldpausch M."/>
            <person name="Lamberth S."/>
            <person name="Van den Daele H."/>
            <person name="De Keyser A."/>
            <person name="Buysshaert C."/>
            <person name="Gielen J."/>
            <person name="Villarroel R."/>
            <person name="De Clercq R."/>
            <person name="van Montagu M."/>
            <person name="Rogers J."/>
            <person name="Cronin A."/>
            <person name="Quail M.A."/>
            <person name="Bray-Allen S."/>
            <person name="Clark L."/>
            <person name="Doggett J."/>
            <person name="Hall S."/>
            <person name="Kay M."/>
            <person name="Lennard N."/>
            <person name="McLay K."/>
            <person name="Mayes R."/>
            <person name="Pettett A."/>
            <person name="Rajandream M.A."/>
            <person name="Lyne M."/>
            <person name="Benes V."/>
            <person name="Rechmann S."/>
            <person name="Borkova D."/>
            <person name="Bloecker H."/>
            <person name="Scharfe M."/>
            <person name="Grimm M."/>
            <person name="Loehnert T.-H."/>
            <person name="Dose S."/>
            <person name="de Haan M."/>
            <person name="Maarse A.C."/>
            <person name="Schaefer M."/>
            <person name="Mueller-Auer S."/>
            <person name="Gabel C."/>
            <person name="Fuchs M."/>
            <person name="Fartmann B."/>
            <person name="Granderath K."/>
            <person name="Dauner D."/>
            <person name="Herzl A."/>
            <person name="Neumann S."/>
            <person name="Argiriou A."/>
            <person name="Vitale D."/>
            <person name="Liguori R."/>
            <person name="Piravandi E."/>
            <person name="Massenet O."/>
            <person name="Quigley F."/>
            <person name="Clabauld G."/>
            <person name="Muendlein A."/>
            <person name="Felber R."/>
            <person name="Schnabl S."/>
            <person name="Hiller R."/>
            <person name="Schmidt W."/>
            <person name="Lecharny A."/>
            <person name="Aubourg S."/>
            <person name="Chefdor F."/>
            <person name="Cooke R."/>
            <person name="Berger C."/>
            <person name="Monfort A."/>
            <person name="Casacuberta E."/>
            <person name="Gibbons T."/>
            <person name="Weber N."/>
            <person name="Vandenbol M."/>
            <person name="Bargues M."/>
            <person name="Terol J."/>
            <person name="Torres A."/>
            <person name="Perez-Perez A."/>
            <person name="Purnelle B."/>
            <person name="Bent E."/>
            <person name="Johnson S."/>
            <person name="Tacon D."/>
            <person name="Jesse T."/>
            <person name="Heijnen L."/>
            <person name="Schwarz S."/>
            <person name="Scholler P."/>
            <person name="Heber S."/>
            <person name="Francs P."/>
            <person name="Bielke C."/>
            <person name="Frishman D."/>
            <person name="Haase D."/>
            <person name="Lemcke K."/>
            <person name="Mewes H.-W."/>
            <person name="Stocker S."/>
            <person name="Zaccaria P."/>
            <person name="Bevan M."/>
            <person name="Wilson R.K."/>
            <person name="de la Bastide M."/>
            <person name="Habermann K."/>
            <person name="Parnell L."/>
            <person name="Dedhia N."/>
            <person name="Gnoj L."/>
            <person name="Schutz K."/>
            <person name="Huang E."/>
            <person name="Spiegel L."/>
            <person name="Sekhon M."/>
            <person name="Murray J."/>
            <person name="Sheet P."/>
            <person name="Cordes M."/>
            <person name="Abu-Threideh J."/>
            <person name="Stoneking T."/>
            <person name="Kalicki J."/>
            <person name="Graves T."/>
            <person name="Harmon G."/>
            <person name="Edwards J."/>
            <person name="Latreille P."/>
            <person name="Courtney L."/>
            <person name="Cloud J."/>
            <person name="Abbott A."/>
            <person name="Scott K."/>
            <person name="Johnson D."/>
            <person name="Minx P."/>
            <person name="Bentley D."/>
            <person name="Fulton B."/>
            <person name="Miller N."/>
            <person name="Greco T."/>
            <person name="Kemp K."/>
            <person name="Kramer J."/>
            <person name="Fulton L."/>
            <person name="Mardis E."/>
            <person name="Dante M."/>
            <person name="Pepin K."/>
            <person name="Hillier L.W."/>
            <person name="Nelson J."/>
            <person name="Spieth J."/>
            <person name="Ryan E."/>
            <person name="Andrews S."/>
            <person name="Geisel C."/>
            <person name="Layman D."/>
            <person name="Du H."/>
            <person name="Ali J."/>
            <person name="Berghoff A."/>
            <person name="Jones K."/>
            <person name="Drone K."/>
            <person name="Cotton M."/>
            <person name="Joshu C."/>
            <person name="Antonoiu B."/>
            <person name="Zidanic M."/>
            <person name="Strong C."/>
            <person name="Sun H."/>
            <person name="Lamar B."/>
            <person name="Yordan C."/>
            <person name="Ma P."/>
            <person name="Zhong J."/>
            <person name="Preston R."/>
            <person name="Vil D."/>
            <person name="Shekher M."/>
            <person name="Matero A."/>
            <person name="Shah R."/>
            <person name="Swaby I.K."/>
            <person name="O'Shaughnessy A."/>
            <person name="Rodriguez M."/>
            <person name="Hoffman J."/>
            <person name="Till S."/>
            <person name="Granat S."/>
            <person name="Shohdy N."/>
            <person name="Hasegawa A."/>
            <person name="Hameed A."/>
            <person name="Lodhi M."/>
            <person name="Johnson A."/>
            <person name="Chen E."/>
            <person name="Marra M.A."/>
            <person name="Martienssen R."/>
            <person name="McCombie W.R."/>
        </authorList>
    </citation>
    <scope>NUCLEOTIDE SEQUENCE [LARGE SCALE GENOMIC DNA]</scope>
    <source>
        <strain>cv. Columbia</strain>
    </source>
</reference>
<reference key="2">
    <citation type="journal article" date="2017" name="Plant J.">
        <title>Araport11: a complete reannotation of the Arabidopsis thaliana reference genome.</title>
        <authorList>
            <person name="Cheng C.Y."/>
            <person name="Krishnakumar V."/>
            <person name="Chan A.P."/>
            <person name="Thibaud-Nissen F."/>
            <person name="Schobel S."/>
            <person name="Town C.D."/>
        </authorList>
    </citation>
    <scope>GENOME REANNOTATION</scope>
    <source>
        <strain>cv. Columbia</strain>
    </source>
</reference>
<reference key="3">
    <citation type="journal article" date="2003" name="Science">
        <title>Empirical analysis of transcriptional activity in the Arabidopsis genome.</title>
        <authorList>
            <person name="Yamada K."/>
            <person name="Lim J."/>
            <person name="Dale J.M."/>
            <person name="Chen H."/>
            <person name="Shinn P."/>
            <person name="Palm C.J."/>
            <person name="Southwick A.M."/>
            <person name="Wu H.C."/>
            <person name="Kim C.J."/>
            <person name="Nguyen M."/>
            <person name="Pham P.K."/>
            <person name="Cheuk R.F."/>
            <person name="Karlin-Newmann G."/>
            <person name="Liu S.X."/>
            <person name="Lam B."/>
            <person name="Sakano H."/>
            <person name="Wu T."/>
            <person name="Yu G."/>
            <person name="Miranda M."/>
            <person name="Quach H.L."/>
            <person name="Tripp M."/>
            <person name="Chang C.H."/>
            <person name="Lee J.M."/>
            <person name="Toriumi M.J."/>
            <person name="Chan M.M."/>
            <person name="Tang C.C."/>
            <person name="Onodera C.S."/>
            <person name="Deng J.M."/>
            <person name="Akiyama K."/>
            <person name="Ansari Y."/>
            <person name="Arakawa T."/>
            <person name="Banh J."/>
            <person name="Banno F."/>
            <person name="Bowser L."/>
            <person name="Brooks S.Y."/>
            <person name="Carninci P."/>
            <person name="Chao Q."/>
            <person name="Choy N."/>
            <person name="Enju A."/>
            <person name="Goldsmith A.D."/>
            <person name="Gurjal M."/>
            <person name="Hansen N.F."/>
            <person name="Hayashizaki Y."/>
            <person name="Johnson-Hopson C."/>
            <person name="Hsuan V.W."/>
            <person name="Iida K."/>
            <person name="Karnes M."/>
            <person name="Khan S."/>
            <person name="Koesema E."/>
            <person name="Ishida J."/>
            <person name="Jiang P.X."/>
            <person name="Jones T."/>
            <person name="Kawai J."/>
            <person name="Kamiya A."/>
            <person name="Meyers C."/>
            <person name="Nakajima M."/>
            <person name="Narusaka M."/>
            <person name="Seki M."/>
            <person name="Sakurai T."/>
            <person name="Satou M."/>
            <person name="Tamse R."/>
            <person name="Vaysberg M."/>
            <person name="Wallender E.K."/>
            <person name="Wong C."/>
            <person name="Yamamura Y."/>
            <person name="Yuan S."/>
            <person name="Shinozaki K."/>
            <person name="Davis R.W."/>
            <person name="Theologis A."/>
            <person name="Ecker J.R."/>
        </authorList>
    </citation>
    <scope>NUCLEOTIDE SEQUENCE [LARGE SCALE MRNA]</scope>
    <source>
        <strain>cv. Columbia</strain>
    </source>
</reference>
<reference key="4">
    <citation type="journal article" date="2007" name="Plant J.">
        <title>Arabidopsis ESK1 encodes a novel regulator of freezing tolerance.</title>
        <authorList>
            <person name="Xin Z."/>
            <person name="Mandaokar A."/>
            <person name="Chen J."/>
            <person name="Last R.L."/>
            <person name="Browse J."/>
        </authorList>
    </citation>
    <scope>GENE FAMILY</scope>
    <source>
        <strain>cv. Columbia</strain>
    </source>
</reference>
<reference key="5">
    <citation type="journal article" date="2010" name="Plant Physiol.">
        <title>TRICHOME BIREFRINGENCE and its homolog AT5G01360 encode plant-specific DUF231 proteins required for cellulose biosynthesis in Arabidopsis.</title>
        <authorList>
            <person name="Bischoff V."/>
            <person name="Nita S."/>
            <person name="Neumetzler L."/>
            <person name="Schindelasch D."/>
            <person name="Urbain A."/>
            <person name="Eshed R."/>
            <person name="Persson S."/>
            <person name="Delmer D."/>
            <person name="Scheible W.R."/>
        </authorList>
    </citation>
    <scope>GENE FAMILY</scope>
    <scope>NOMENCLATURE</scope>
</reference>
<reference key="6">
    <citation type="journal article" date="2010" name="Plant Signal. Behav.">
        <title>Involvement of TBL/DUF231 proteins into cell wall biology.</title>
        <authorList>
            <person name="Bischoff V."/>
            <person name="Selbig J."/>
            <person name="Scheible W.R."/>
        </authorList>
    </citation>
    <scope>3D-STRUCTURE MODELING</scope>
</reference>
<gene>
    <name type="primary">TBL18</name>
    <name type="ordered locus">At4g25360</name>
    <name type="ORF">T30C3.30</name>
</gene>
<dbReference type="EMBL" id="AL079350">
    <property type="protein sequence ID" value="CAB45513.1"/>
    <property type="status" value="ALT_SEQ"/>
    <property type="molecule type" value="Genomic_DNA"/>
</dbReference>
<dbReference type="EMBL" id="AL161563">
    <property type="protein sequence ID" value="CAB81347.1"/>
    <property type="status" value="ALT_SEQ"/>
    <property type="molecule type" value="Genomic_DNA"/>
</dbReference>
<dbReference type="EMBL" id="CP002687">
    <property type="protein sequence ID" value="AEE85046.1"/>
    <property type="molecule type" value="Genomic_DNA"/>
</dbReference>
<dbReference type="EMBL" id="CP002687">
    <property type="protein sequence ID" value="AEE85047.1"/>
    <property type="molecule type" value="Genomic_DNA"/>
</dbReference>
<dbReference type="EMBL" id="AY070058">
    <property type="protein sequence ID" value="AAL49815.1"/>
    <property type="molecule type" value="mRNA"/>
</dbReference>
<dbReference type="EMBL" id="AY133759">
    <property type="protein sequence ID" value="AAM91693.1"/>
    <property type="molecule type" value="mRNA"/>
</dbReference>
<dbReference type="PIR" id="T10216">
    <property type="entry name" value="T10216"/>
</dbReference>
<dbReference type="RefSeq" id="NP_001031712.1">
    <property type="nucleotide sequence ID" value="NM_001036635.1"/>
</dbReference>
<dbReference type="RefSeq" id="NP_194266.2">
    <property type="nucleotide sequence ID" value="NM_118668.5"/>
</dbReference>
<dbReference type="SMR" id="Q8VYS5"/>
<dbReference type="BioGRID" id="13926">
    <property type="interactions" value="146"/>
</dbReference>
<dbReference type="FunCoup" id="Q8VYS5">
    <property type="interactions" value="999"/>
</dbReference>
<dbReference type="IntAct" id="Q8VYS5">
    <property type="interactions" value="147"/>
</dbReference>
<dbReference type="STRING" id="3702.Q8VYS5"/>
<dbReference type="iPTMnet" id="Q8VYS5"/>
<dbReference type="PaxDb" id="3702-AT4G25360.2"/>
<dbReference type="ProteomicsDB" id="234244"/>
<dbReference type="EnsemblPlants" id="AT4G25360.1">
    <property type="protein sequence ID" value="AT4G25360.1"/>
    <property type="gene ID" value="AT4G25360"/>
</dbReference>
<dbReference type="EnsemblPlants" id="AT4G25360.2">
    <property type="protein sequence ID" value="AT4G25360.2"/>
    <property type="gene ID" value="AT4G25360"/>
</dbReference>
<dbReference type="GeneID" id="828639"/>
<dbReference type="Gramene" id="AT4G25360.1">
    <property type="protein sequence ID" value="AT4G25360.1"/>
    <property type="gene ID" value="AT4G25360"/>
</dbReference>
<dbReference type="Gramene" id="AT4G25360.2">
    <property type="protein sequence ID" value="AT4G25360.2"/>
    <property type="gene ID" value="AT4G25360"/>
</dbReference>
<dbReference type="KEGG" id="ath:AT4G25360"/>
<dbReference type="Araport" id="AT4G25360"/>
<dbReference type="TAIR" id="AT4G25360">
    <property type="gene designation" value="TBL18"/>
</dbReference>
<dbReference type="eggNOG" id="ENOG502QTC6">
    <property type="taxonomic scope" value="Eukaryota"/>
</dbReference>
<dbReference type="HOGENOM" id="CLU_020953_6_3_1"/>
<dbReference type="InParanoid" id="Q8VYS5"/>
<dbReference type="OMA" id="SYENWRW"/>
<dbReference type="PhylomeDB" id="Q8VYS5"/>
<dbReference type="PRO" id="PR:Q8VYS5"/>
<dbReference type="Proteomes" id="UP000006548">
    <property type="component" value="Chromosome 4"/>
</dbReference>
<dbReference type="ExpressionAtlas" id="Q8VYS5">
    <property type="expression patterns" value="baseline and differential"/>
</dbReference>
<dbReference type="GO" id="GO:0016020">
    <property type="term" value="C:membrane"/>
    <property type="evidence" value="ECO:0007669"/>
    <property type="project" value="UniProtKB-SubCell"/>
</dbReference>
<dbReference type="GO" id="GO:0016413">
    <property type="term" value="F:O-acetyltransferase activity"/>
    <property type="evidence" value="ECO:0007669"/>
    <property type="project" value="InterPro"/>
</dbReference>
<dbReference type="InterPro" id="IPR029962">
    <property type="entry name" value="TBL"/>
</dbReference>
<dbReference type="InterPro" id="IPR026057">
    <property type="entry name" value="TBL_C"/>
</dbReference>
<dbReference type="InterPro" id="IPR025846">
    <property type="entry name" value="TBL_N"/>
</dbReference>
<dbReference type="PANTHER" id="PTHR32285:SF18">
    <property type="entry name" value="PROTEIN TRICHOME BIREFRINGENCE-LIKE 18"/>
    <property type="match status" value="1"/>
</dbReference>
<dbReference type="PANTHER" id="PTHR32285">
    <property type="entry name" value="PROTEIN TRICHOME BIREFRINGENCE-LIKE 9-RELATED"/>
    <property type="match status" value="1"/>
</dbReference>
<dbReference type="Pfam" id="PF13839">
    <property type="entry name" value="PC-Esterase"/>
    <property type="match status" value="1"/>
</dbReference>
<dbReference type="Pfam" id="PF14416">
    <property type="entry name" value="PMR5N"/>
    <property type="match status" value="1"/>
</dbReference>
<organism>
    <name type="scientific">Arabidopsis thaliana</name>
    <name type="common">Mouse-ear cress</name>
    <dbReference type="NCBI Taxonomy" id="3702"/>
    <lineage>
        <taxon>Eukaryota</taxon>
        <taxon>Viridiplantae</taxon>
        <taxon>Streptophyta</taxon>
        <taxon>Embryophyta</taxon>
        <taxon>Tracheophyta</taxon>
        <taxon>Spermatophyta</taxon>
        <taxon>Magnoliopsida</taxon>
        <taxon>eudicotyledons</taxon>
        <taxon>Gunneridae</taxon>
        <taxon>Pentapetalae</taxon>
        <taxon>rosids</taxon>
        <taxon>malvids</taxon>
        <taxon>Brassicales</taxon>
        <taxon>Brassicaceae</taxon>
        <taxon>Camelineae</taxon>
        <taxon>Arabidopsis</taxon>
    </lineage>
</organism>
<protein>
    <recommendedName>
        <fullName>Protein trichome birefringence-like 18</fullName>
    </recommendedName>
</protein>